<accession>B5YTN6</accession>
<reference key="1">
    <citation type="journal article" date="2011" name="Proc. Natl. Acad. Sci. U.S.A.">
        <title>Genomic anatomy of Escherichia coli O157:H7 outbreaks.</title>
        <authorList>
            <person name="Eppinger M."/>
            <person name="Mammel M.K."/>
            <person name="Leclerc J.E."/>
            <person name="Ravel J."/>
            <person name="Cebula T.A."/>
        </authorList>
    </citation>
    <scope>NUCLEOTIDE SEQUENCE [LARGE SCALE GENOMIC DNA]</scope>
    <source>
        <strain>EC4115 / EHEC</strain>
    </source>
</reference>
<proteinExistence type="inferred from homology"/>
<name>RL22_ECO5E</name>
<dbReference type="EMBL" id="CP001164">
    <property type="protein sequence ID" value="ACI39087.1"/>
    <property type="molecule type" value="Genomic_DNA"/>
</dbReference>
<dbReference type="RefSeq" id="WP_000447529.1">
    <property type="nucleotide sequence ID" value="NC_011353.1"/>
</dbReference>
<dbReference type="SMR" id="B5YTN6"/>
<dbReference type="GeneID" id="93778672"/>
<dbReference type="KEGG" id="ecf:ECH74115_4638"/>
<dbReference type="HOGENOM" id="CLU_083987_3_3_6"/>
<dbReference type="GO" id="GO:0022625">
    <property type="term" value="C:cytosolic large ribosomal subunit"/>
    <property type="evidence" value="ECO:0007669"/>
    <property type="project" value="TreeGrafter"/>
</dbReference>
<dbReference type="GO" id="GO:0019843">
    <property type="term" value="F:rRNA binding"/>
    <property type="evidence" value="ECO:0007669"/>
    <property type="project" value="UniProtKB-UniRule"/>
</dbReference>
<dbReference type="GO" id="GO:0003735">
    <property type="term" value="F:structural constituent of ribosome"/>
    <property type="evidence" value="ECO:0007669"/>
    <property type="project" value="InterPro"/>
</dbReference>
<dbReference type="GO" id="GO:0006412">
    <property type="term" value="P:translation"/>
    <property type="evidence" value="ECO:0007669"/>
    <property type="project" value="UniProtKB-UniRule"/>
</dbReference>
<dbReference type="CDD" id="cd00336">
    <property type="entry name" value="Ribosomal_L22"/>
    <property type="match status" value="1"/>
</dbReference>
<dbReference type="FunFam" id="3.90.470.10:FF:000001">
    <property type="entry name" value="50S ribosomal protein L22"/>
    <property type="match status" value="1"/>
</dbReference>
<dbReference type="Gene3D" id="3.90.470.10">
    <property type="entry name" value="Ribosomal protein L22/L17"/>
    <property type="match status" value="1"/>
</dbReference>
<dbReference type="HAMAP" id="MF_01331_B">
    <property type="entry name" value="Ribosomal_uL22_B"/>
    <property type="match status" value="1"/>
</dbReference>
<dbReference type="InterPro" id="IPR001063">
    <property type="entry name" value="Ribosomal_uL22"/>
</dbReference>
<dbReference type="InterPro" id="IPR005727">
    <property type="entry name" value="Ribosomal_uL22_bac/chlpt-type"/>
</dbReference>
<dbReference type="InterPro" id="IPR047867">
    <property type="entry name" value="Ribosomal_uL22_bac/org-type"/>
</dbReference>
<dbReference type="InterPro" id="IPR018260">
    <property type="entry name" value="Ribosomal_uL22_CS"/>
</dbReference>
<dbReference type="InterPro" id="IPR036394">
    <property type="entry name" value="Ribosomal_uL22_sf"/>
</dbReference>
<dbReference type="NCBIfam" id="TIGR01044">
    <property type="entry name" value="rplV_bact"/>
    <property type="match status" value="1"/>
</dbReference>
<dbReference type="PANTHER" id="PTHR13501">
    <property type="entry name" value="CHLOROPLAST 50S RIBOSOMAL PROTEIN L22-RELATED"/>
    <property type="match status" value="1"/>
</dbReference>
<dbReference type="PANTHER" id="PTHR13501:SF8">
    <property type="entry name" value="LARGE RIBOSOMAL SUBUNIT PROTEIN UL22M"/>
    <property type="match status" value="1"/>
</dbReference>
<dbReference type="Pfam" id="PF00237">
    <property type="entry name" value="Ribosomal_L22"/>
    <property type="match status" value="1"/>
</dbReference>
<dbReference type="SUPFAM" id="SSF54843">
    <property type="entry name" value="Ribosomal protein L22"/>
    <property type="match status" value="1"/>
</dbReference>
<dbReference type="PROSITE" id="PS00464">
    <property type="entry name" value="RIBOSOMAL_L22"/>
    <property type="match status" value="1"/>
</dbReference>
<evidence type="ECO:0000255" key="1">
    <source>
        <dbReference type="HAMAP-Rule" id="MF_01331"/>
    </source>
</evidence>
<evidence type="ECO:0000305" key="2"/>
<organism>
    <name type="scientific">Escherichia coli O157:H7 (strain EC4115 / EHEC)</name>
    <dbReference type="NCBI Taxonomy" id="444450"/>
    <lineage>
        <taxon>Bacteria</taxon>
        <taxon>Pseudomonadati</taxon>
        <taxon>Pseudomonadota</taxon>
        <taxon>Gammaproteobacteria</taxon>
        <taxon>Enterobacterales</taxon>
        <taxon>Enterobacteriaceae</taxon>
        <taxon>Escherichia</taxon>
    </lineage>
</organism>
<keyword id="KW-0687">Ribonucleoprotein</keyword>
<keyword id="KW-0689">Ribosomal protein</keyword>
<keyword id="KW-0694">RNA-binding</keyword>
<keyword id="KW-0699">rRNA-binding</keyword>
<feature type="chain" id="PRO_1000142255" description="Large ribosomal subunit protein uL22">
    <location>
        <begin position="1"/>
        <end position="110"/>
    </location>
</feature>
<gene>
    <name evidence="1" type="primary">rplV</name>
    <name type="ordered locus">ECH74115_4638</name>
</gene>
<comment type="function">
    <text evidence="1">This protein binds specifically to 23S rRNA; its binding is stimulated by other ribosomal proteins, e.g. L4, L17, and L20. It is important during the early stages of 50S assembly. It makes multiple contacts with different domains of the 23S rRNA in the assembled 50S subunit and ribosome (By similarity).</text>
</comment>
<comment type="function">
    <text evidence="1">The globular domain of the protein is located near the polypeptide exit tunnel on the outside of the subunit, while an extended beta-hairpin is found that lines the wall of the exit tunnel in the center of the 70S ribosome.</text>
</comment>
<comment type="subunit">
    <text evidence="1">Part of the 50S ribosomal subunit.</text>
</comment>
<comment type="similarity">
    <text evidence="1">Belongs to the universal ribosomal protein uL22 family.</text>
</comment>
<sequence length="110" mass="12226">METIAKHRHARSSAQKVRLVADLIRGKKVSQALDILTYTNKKAAVLVKKVLESAIANAEHNDGADIDDLKVTKIFVDEGPSMKRIMPRAKGRADRILKRTSHITVVVSDR</sequence>
<protein>
    <recommendedName>
        <fullName evidence="1">Large ribosomal subunit protein uL22</fullName>
    </recommendedName>
    <alternativeName>
        <fullName evidence="2">50S ribosomal protein L22</fullName>
    </alternativeName>
</protein>